<accession>C0RHQ4</accession>
<dbReference type="EMBL" id="CP001488">
    <property type="protein sequence ID" value="ACO00362.1"/>
    <property type="molecule type" value="Genomic_DNA"/>
</dbReference>
<dbReference type="RefSeq" id="WP_004683258.1">
    <property type="nucleotide sequence ID" value="NC_012441.1"/>
</dbReference>
<dbReference type="SMR" id="C0RHQ4"/>
<dbReference type="GeneID" id="29594234"/>
<dbReference type="KEGG" id="bmi:BMEA_A0591"/>
<dbReference type="HOGENOM" id="CLU_069356_15_4_5"/>
<dbReference type="UniPathway" id="UPA00529"/>
<dbReference type="Proteomes" id="UP000001748">
    <property type="component" value="Chromosome I"/>
</dbReference>
<dbReference type="GO" id="GO:0003700">
    <property type="term" value="F:DNA-binding transcription factor activity"/>
    <property type="evidence" value="ECO:0007669"/>
    <property type="project" value="UniProtKB-UniRule"/>
</dbReference>
<dbReference type="GO" id="GO:0000976">
    <property type="term" value="F:transcription cis-regulatory region binding"/>
    <property type="evidence" value="ECO:0007669"/>
    <property type="project" value="TreeGrafter"/>
</dbReference>
<dbReference type="GO" id="GO:0019285">
    <property type="term" value="P:glycine betaine biosynthetic process from choline"/>
    <property type="evidence" value="ECO:0007669"/>
    <property type="project" value="UniProtKB-UniRule"/>
</dbReference>
<dbReference type="GO" id="GO:0045892">
    <property type="term" value="P:negative regulation of DNA-templated transcription"/>
    <property type="evidence" value="ECO:0007669"/>
    <property type="project" value="UniProtKB-UniRule"/>
</dbReference>
<dbReference type="Gene3D" id="1.10.357.10">
    <property type="entry name" value="Tetracycline Repressor, domain 2"/>
    <property type="match status" value="1"/>
</dbReference>
<dbReference type="HAMAP" id="MF_00768">
    <property type="entry name" value="HTH_type_BetI"/>
    <property type="match status" value="1"/>
</dbReference>
<dbReference type="InterPro" id="IPR039538">
    <property type="entry name" value="BetI_C"/>
</dbReference>
<dbReference type="InterPro" id="IPR023772">
    <property type="entry name" value="DNA-bd_HTH_TetR-type_CS"/>
</dbReference>
<dbReference type="InterPro" id="IPR009057">
    <property type="entry name" value="Homeodomain-like_sf"/>
</dbReference>
<dbReference type="InterPro" id="IPR050109">
    <property type="entry name" value="HTH-type_TetR-like_transc_reg"/>
</dbReference>
<dbReference type="InterPro" id="IPR001647">
    <property type="entry name" value="HTH_TetR"/>
</dbReference>
<dbReference type="InterPro" id="IPR036271">
    <property type="entry name" value="Tet_transcr_reg_TetR-rel_C_sf"/>
</dbReference>
<dbReference type="InterPro" id="IPR017757">
    <property type="entry name" value="Tscrpt_rep_BetI"/>
</dbReference>
<dbReference type="NCBIfam" id="TIGR03384">
    <property type="entry name" value="betaine_BetI"/>
    <property type="match status" value="1"/>
</dbReference>
<dbReference type="NCBIfam" id="NF001978">
    <property type="entry name" value="PRK00767.1"/>
    <property type="match status" value="1"/>
</dbReference>
<dbReference type="PANTHER" id="PTHR30055:SF234">
    <property type="entry name" value="HTH-TYPE TRANSCRIPTIONAL REGULATOR BETI"/>
    <property type="match status" value="1"/>
</dbReference>
<dbReference type="PANTHER" id="PTHR30055">
    <property type="entry name" value="HTH-TYPE TRANSCRIPTIONAL REGULATOR RUTR"/>
    <property type="match status" value="1"/>
</dbReference>
<dbReference type="Pfam" id="PF13977">
    <property type="entry name" value="TetR_C_6"/>
    <property type="match status" value="1"/>
</dbReference>
<dbReference type="Pfam" id="PF00440">
    <property type="entry name" value="TetR_N"/>
    <property type="match status" value="1"/>
</dbReference>
<dbReference type="PRINTS" id="PR00455">
    <property type="entry name" value="HTHTETR"/>
</dbReference>
<dbReference type="SUPFAM" id="SSF46689">
    <property type="entry name" value="Homeodomain-like"/>
    <property type="match status" value="1"/>
</dbReference>
<dbReference type="SUPFAM" id="SSF48498">
    <property type="entry name" value="Tetracyclin repressor-like, C-terminal domain"/>
    <property type="match status" value="1"/>
</dbReference>
<dbReference type="PROSITE" id="PS01081">
    <property type="entry name" value="HTH_TETR_1"/>
    <property type="match status" value="1"/>
</dbReference>
<dbReference type="PROSITE" id="PS50977">
    <property type="entry name" value="HTH_TETR_2"/>
    <property type="match status" value="1"/>
</dbReference>
<gene>
    <name evidence="2" type="primary">betI</name>
    <name type="ordered locus">BMEA_A0591</name>
</gene>
<keyword id="KW-0238">DNA-binding</keyword>
<keyword id="KW-0678">Repressor</keyword>
<keyword id="KW-0804">Transcription</keyword>
<keyword id="KW-0805">Transcription regulation</keyword>
<feature type="chain" id="PRO_1000148444" description="HTH-type transcriptional regulator BetI">
    <location>
        <begin position="1"/>
        <end position="198"/>
    </location>
</feature>
<feature type="domain" description="HTH tetR-type" evidence="2">
    <location>
        <begin position="8"/>
        <end position="68"/>
    </location>
</feature>
<feature type="DNA-binding region" description="H-T-H motif" evidence="2">
    <location>
        <begin position="31"/>
        <end position="50"/>
    </location>
</feature>
<proteinExistence type="inferred from homology"/>
<comment type="function">
    <text evidence="1">Repressor involved in the biosynthesis of the osmoprotectant glycine betaine. It represses transcription of the choline transporter BetT and the genes of BetAB involved in the synthesis of glycine betaine (By similarity).</text>
</comment>
<comment type="pathway">
    <text>Amine and polyamine biosynthesis; betaine biosynthesis via choline pathway [regulation].</text>
</comment>
<sequence length="198" mass="21650">MPKIGMEPLRRRELIDAAIRTIGQRGSLDVTVAQIAHEAGVSPALAHHYFGGKDKLILATMRHLLRELGRDLNAAIKQANTPHERIAAIIAVNFSATQFAQETIAAWLTFYVHAQQSDDIKRLLRIYARRLHSNLVFALEQLTSRARANRIAEGAGAMIDGLYIRHALGADAPDAASAIALVEDYIAIQLSGQPSAEN</sequence>
<organism>
    <name type="scientific">Brucella melitensis biotype 2 (strain ATCC 23457)</name>
    <dbReference type="NCBI Taxonomy" id="546272"/>
    <lineage>
        <taxon>Bacteria</taxon>
        <taxon>Pseudomonadati</taxon>
        <taxon>Pseudomonadota</taxon>
        <taxon>Alphaproteobacteria</taxon>
        <taxon>Hyphomicrobiales</taxon>
        <taxon>Brucellaceae</taxon>
        <taxon>Brucella/Ochrobactrum group</taxon>
        <taxon>Brucella</taxon>
    </lineage>
</organism>
<protein>
    <recommendedName>
        <fullName evidence="2">HTH-type transcriptional regulator BetI</fullName>
    </recommendedName>
</protein>
<reference key="1">
    <citation type="submission" date="2009-03" db="EMBL/GenBank/DDBJ databases">
        <title>Brucella melitensis ATCC 23457 whole genome shotgun sequencing project.</title>
        <authorList>
            <person name="Setubal J.C."/>
            <person name="Boyle S."/>
            <person name="Crasta O.R."/>
            <person name="Gillespie J.J."/>
            <person name="Kenyon R.W."/>
            <person name="Lu J."/>
            <person name="Mane S."/>
            <person name="Nagrani S."/>
            <person name="Shallom J.M."/>
            <person name="Shallom S."/>
            <person name="Shukla M."/>
            <person name="Snyder E.E."/>
            <person name="Sobral B.W."/>
            <person name="Wattam A.R."/>
            <person name="Will R."/>
            <person name="Williams K."/>
            <person name="Yoo H."/>
            <person name="Munk C."/>
            <person name="Tapia R."/>
            <person name="Han C."/>
            <person name="Detter J.C."/>
            <person name="Bruce D."/>
            <person name="Brettin T.S."/>
        </authorList>
    </citation>
    <scope>NUCLEOTIDE SEQUENCE [LARGE SCALE GENOMIC DNA]</scope>
    <source>
        <strain>ATCC 23457</strain>
    </source>
</reference>
<evidence type="ECO:0000250" key="1"/>
<evidence type="ECO:0000255" key="2">
    <source>
        <dbReference type="HAMAP-Rule" id="MF_00768"/>
    </source>
</evidence>
<name>BETI_BRUMB</name>